<accession>Q0TEB3</accession>
<dbReference type="EC" id="5.4.99.27" evidence="1"/>
<dbReference type="EMBL" id="CP000247">
    <property type="protein sequence ID" value="ABG70716.1"/>
    <property type="molecule type" value="Genomic_DNA"/>
</dbReference>
<dbReference type="RefSeq" id="WP_000568931.1">
    <property type="nucleotide sequence ID" value="NC_008253.1"/>
</dbReference>
<dbReference type="SMR" id="Q0TEB3"/>
<dbReference type="KEGG" id="ecp:ECP_2727"/>
<dbReference type="HOGENOM" id="CLU_005281_4_0_6"/>
<dbReference type="Proteomes" id="UP000009182">
    <property type="component" value="Chromosome"/>
</dbReference>
<dbReference type="GO" id="GO:0005829">
    <property type="term" value="C:cytosol"/>
    <property type="evidence" value="ECO:0007669"/>
    <property type="project" value="TreeGrafter"/>
</dbReference>
<dbReference type="GO" id="GO:0003723">
    <property type="term" value="F:RNA binding"/>
    <property type="evidence" value="ECO:0007669"/>
    <property type="project" value="InterPro"/>
</dbReference>
<dbReference type="GO" id="GO:0160150">
    <property type="term" value="F:tRNA pseudouridine(13) synthase activity"/>
    <property type="evidence" value="ECO:0007669"/>
    <property type="project" value="UniProtKB-EC"/>
</dbReference>
<dbReference type="GO" id="GO:0031119">
    <property type="term" value="P:tRNA pseudouridine synthesis"/>
    <property type="evidence" value="ECO:0007669"/>
    <property type="project" value="UniProtKB-UniRule"/>
</dbReference>
<dbReference type="CDD" id="cd02575">
    <property type="entry name" value="PseudoU_synth_EcTruD"/>
    <property type="match status" value="1"/>
</dbReference>
<dbReference type="FunFam" id="3.30.2340.10:FF:000001">
    <property type="entry name" value="tRNA pseudouridine synthase D"/>
    <property type="match status" value="1"/>
</dbReference>
<dbReference type="FunFam" id="3.30.2350.20:FF:000001">
    <property type="entry name" value="tRNA pseudouridine synthase D"/>
    <property type="match status" value="1"/>
</dbReference>
<dbReference type="Gene3D" id="3.30.2350.20">
    <property type="entry name" value="TruD, catalytic domain"/>
    <property type="match status" value="1"/>
</dbReference>
<dbReference type="Gene3D" id="3.30.2340.10">
    <property type="entry name" value="TruD, insertion domain"/>
    <property type="match status" value="1"/>
</dbReference>
<dbReference type="HAMAP" id="MF_01082">
    <property type="entry name" value="TruD"/>
    <property type="match status" value="1"/>
</dbReference>
<dbReference type="InterPro" id="IPR020103">
    <property type="entry name" value="PsdUridine_synth_cat_dom_sf"/>
</dbReference>
<dbReference type="InterPro" id="IPR001656">
    <property type="entry name" value="PsdUridine_synth_TruD"/>
</dbReference>
<dbReference type="InterPro" id="IPR020119">
    <property type="entry name" value="PsdUridine_synth_TruD_CS"/>
</dbReference>
<dbReference type="InterPro" id="IPR011760">
    <property type="entry name" value="PsdUridine_synth_TruD_insert"/>
</dbReference>
<dbReference type="InterPro" id="IPR042214">
    <property type="entry name" value="TruD_catalytic"/>
</dbReference>
<dbReference type="InterPro" id="IPR043165">
    <property type="entry name" value="TruD_insert_sf"/>
</dbReference>
<dbReference type="InterPro" id="IPR050170">
    <property type="entry name" value="TruD_pseudoU_synthase"/>
</dbReference>
<dbReference type="NCBIfam" id="NF002155">
    <property type="entry name" value="PRK00984.1-4"/>
    <property type="match status" value="1"/>
</dbReference>
<dbReference type="NCBIfam" id="TIGR00094">
    <property type="entry name" value="tRNA_TruD_broad"/>
    <property type="match status" value="1"/>
</dbReference>
<dbReference type="PANTHER" id="PTHR47811">
    <property type="entry name" value="TRNA PSEUDOURIDINE SYNTHASE D"/>
    <property type="match status" value="1"/>
</dbReference>
<dbReference type="PANTHER" id="PTHR47811:SF1">
    <property type="entry name" value="TRNA PSEUDOURIDINE SYNTHASE D"/>
    <property type="match status" value="1"/>
</dbReference>
<dbReference type="Pfam" id="PF01142">
    <property type="entry name" value="TruD"/>
    <property type="match status" value="2"/>
</dbReference>
<dbReference type="SUPFAM" id="SSF55120">
    <property type="entry name" value="Pseudouridine synthase"/>
    <property type="match status" value="1"/>
</dbReference>
<dbReference type="PROSITE" id="PS50984">
    <property type="entry name" value="TRUD"/>
    <property type="match status" value="1"/>
</dbReference>
<dbReference type="PROSITE" id="PS01268">
    <property type="entry name" value="UPF0024"/>
    <property type="match status" value="1"/>
</dbReference>
<protein>
    <recommendedName>
        <fullName evidence="1">tRNA pseudouridine synthase D</fullName>
        <ecNumber evidence="1">5.4.99.27</ecNumber>
    </recommendedName>
    <alternativeName>
        <fullName evidence="1">tRNA pseudouridine(13) synthase</fullName>
    </alternativeName>
    <alternativeName>
        <fullName evidence="1">tRNA pseudouridylate synthase D</fullName>
    </alternativeName>
    <alternativeName>
        <fullName evidence="1">tRNA-uridine isomerase D</fullName>
    </alternativeName>
</protein>
<keyword id="KW-0413">Isomerase</keyword>
<keyword id="KW-0819">tRNA processing</keyword>
<reference key="1">
    <citation type="journal article" date="2006" name="Mol. Microbiol.">
        <title>Role of pathogenicity island-associated integrases in the genome plasticity of uropathogenic Escherichia coli strain 536.</title>
        <authorList>
            <person name="Hochhut B."/>
            <person name="Wilde C."/>
            <person name="Balling G."/>
            <person name="Middendorf B."/>
            <person name="Dobrindt U."/>
            <person name="Brzuszkiewicz E."/>
            <person name="Gottschalk G."/>
            <person name="Carniel E."/>
            <person name="Hacker J."/>
        </authorList>
    </citation>
    <scope>NUCLEOTIDE SEQUENCE [LARGE SCALE GENOMIC DNA]</scope>
    <source>
        <strain>536 / UPEC</strain>
    </source>
</reference>
<feature type="chain" id="PRO_1000084737" description="tRNA pseudouridine synthase D">
    <location>
        <begin position="1"/>
        <end position="349"/>
    </location>
</feature>
<feature type="domain" description="TRUD" evidence="1">
    <location>
        <begin position="155"/>
        <end position="303"/>
    </location>
</feature>
<feature type="active site" description="Nucleophile" evidence="1">
    <location>
        <position position="80"/>
    </location>
</feature>
<feature type="binding site" evidence="1">
    <location>
        <position position="27"/>
    </location>
    <ligand>
        <name>substrate</name>
    </ligand>
</feature>
<feature type="binding site" evidence="1">
    <location>
        <position position="129"/>
    </location>
    <ligand>
        <name>substrate</name>
    </ligand>
</feature>
<feature type="binding site" evidence="1">
    <location>
        <position position="329"/>
    </location>
    <ligand>
        <name>substrate</name>
    </ligand>
</feature>
<organism>
    <name type="scientific">Escherichia coli O6:K15:H31 (strain 536 / UPEC)</name>
    <dbReference type="NCBI Taxonomy" id="362663"/>
    <lineage>
        <taxon>Bacteria</taxon>
        <taxon>Pseudomonadati</taxon>
        <taxon>Pseudomonadota</taxon>
        <taxon>Gammaproteobacteria</taxon>
        <taxon>Enterobacterales</taxon>
        <taxon>Enterobacteriaceae</taxon>
        <taxon>Escherichia</taxon>
    </lineage>
</organism>
<name>TRUD_ECOL5</name>
<proteinExistence type="inferred from homology"/>
<sequence length="349" mass="39135">MIEFDNLTYLHGKPQGTGLLKANPEDFVVVEDLGFEPDGEGEHILVRILKNGCNTRFVADALAKFLKIHAREVSFAGQKDKHAVTEQWLCARVPGKEMPDLSAFQLEGCQVLEYARHKRKLRLGALKGNAFTLVLREVSNRDDVEQRLIDICVKGVPNYFGAQRFGIGGSNLQGALRWAQTNTPVRDRNKRSFWLSAARSALFNQIVAERLKKADVNQVVDGDALQLAGRGSWFVATTEELAELQRRVNDKVLMITAALPGSGEWGTQREALAFEQAAVAEETELQTLLVREKVEAARRAMLLYPQQLSWNWWDDVTVEIRFWLPAGSFATSVVRELINTTGDYAHIAE</sequence>
<comment type="function">
    <text evidence="1">Responsible for synthesis of pseudouridine from uracil-13 in transfer RNAs.</text>
</comment>
<comment type="catalytic activity">
    <reaction evidence="1">
        <text>uridine(13) in tRNA = pseudouridine(13) in tRNA</text>
        <dbReference type="Rhea" id="RHEA:42540"/>
        <dbReference type="Rhea" id="RHEA-COMP:10105"/>
        <dbReference type="Rhea" id="RHEA-COMP:10106"/>
        <dbReference type="ChEBI" id="CHEBI:65314"/>
        <dbReference type="ChEBI" id="CHEBI:65315"/>
        <dbReference type="EC" id="5.4.99.27"/>
    </reaction>
</comment>
<comment type="similarity">
    <text evidence="1">Belongs to the pseudouridine synthase TruD family.</text>
</comment>
<gene>
    <name evidence="1" type="primary">truD</name>
    <name type="ordered locus">ECP_2727</name>
</gene>
<evidence type="ECO:0000255" key="1">
    <source>
        <dbReference type="HAMAP-Rule" id="MF_01082"/>
    </source>
</evidence>